<geneLocation type="chloroplast"/>
<accession>P62101</accession>
<accession>P09970</accession>
<organism>
    <name type="scientific">Zea mays</name>
    <name type="common">Maize</name>
    <dbReference type="NCBI Taxonomy" id="4577"/>
    <lineage>
        <taxon>Eukaryota</taxon>
        <taxon>Viridiplantae</taxon>
        <taxon>Streptophyta</taxon>
        <taxon>Embryophyta</taxon>
        <taxon>Tracheophyta</taxon>
        <taxon>Spermatophyta</taxon>
        <taxon>Magnoliopsida</taxon>
        <taxon>Liliopsida</taxon>
        <taxon>Poales</taxon>
        <taxon>Poaceae</taxon>
        <taxon>PACMAD clade</taxon>
        <taxon>Panicoideae</taxon>
        <taxon>Andropogonodae</taxon>
        <taxon>Andropogoneae</taxon>
        <taxon>Tripsacinae</taxon>
        <taxon>Zea</taxon>
    </lineage>
</organism>
<protein>
    <recommendedName>
        <fullName evidence="1">Photosystem II reaction center protein I</fullName>
        <shortName evidence="1">PSII-I</shortName>
    </recommendedName>
    <alternativeName>
        <fullName evidence="1">PSII 4.8 kDa protein</fullName>
    </alternativeName>
</protein>
<evidence type="ECO:0000255" key="1">
    <source>
        <dbReference type="HAMAP-Rule" id="MF_01316"/>
    </source>
</evidence>
<keyword id="KW-0150">Chloroplast</keyword>
<keyword id="KW-0472">Membrane</keyword>
<keyword id="KW-0602">Photosynthesis</keyword>
<keyword id="KW-0604">Photosystem II</keyword>
<keyword id="KW-0934">Plastid</keyword>
<keyword id="KW-0674">Reaction center</keyword>
<keyword id="KW-1185">Reference proteome</keyword>
<keyword id="KW-0793">Thylakoid</keyword>
<keyword id="KW-0812">Transmembrane</keyword>
<keyword id="KW-1133">Transmembrane helix</keyword>
<sequence length="36" mass="4168">MLTLKLFVYTVVIFFVSLFIFGFLSNDPGRNPGREE</sequence>
<proteinExistence type="inferred from homology"/>
<reference key="1">
    <citation type="journal article" date="1995" name="J. Mol. Biol.">
        <title>Complete sequence of the maize chloroplast genome: gene content, hotspots of divergence and fine tuning of genetic information by transcript editing.</title>
        <authorList>
            <person name="Maier R.M."/>
            <person name="Neckermann K."/>
            <person name="Igloi G.L."/>
            <person name="Koessel H."/>
        </authorList>
    </citation>
    <scope>NUCLEOTIDE SEQUENCE [LARGE SCALE GENOMIC DNA]</scope>
    <source>
        <strain>cv. B73</strain>
    </source>
</reference>
<dbReference type="EMBL" id="X86563">
    <property type="protein sequence ID" value="CAA60269.1"/>
    <property type="molecule type" value="Genomic_DNA"/>
</dbReference>
<dbReference type="PIR" id="S58535">
    <property type="entry name" value="S58535"/>
</dbReference>
<dbReference type="RefSeq" id="NP_043008.1">
    <property type="nucleotide sequence ID" value="NC_001666.2"/>
</dbReference>
<dbReference type="SMR" id="P62101"/>
<dbReference type="FunCoup" id="P62101">
    <property type="interactions" value="88"/>
</dbReference>
<dbReference type="STRING" id="4577.P62101"/>
<dbReference type="GeneID" id="845206"/>
<dbReference type="KEGG" id="zma:845206"/>
<dbReference type="MaizeGDB" id="118219"/>
<dbReference type="InParanoid" id="P62101"/>
<dbReference type="OrthoDB" id="1855836at2759"/>
<dbReference type="Proteomes" id="UP000007305">
    <property type="component" value="Chloroplast"/>
</dbReference>
<dbReference type="GO" id="GO:0009535">
    <property type="term" value="C:chloroplast thylakoid membrane"/>
    <property type="evidence" value="ECO:0007669"/>
    <property type="project" value="UniProtKB-SubCell"/>
</dbReference>
<dbReference type="GO" id="GO:0009539">
    <property type="term" value="C:photosystem II reaction center"/>
    <property type="evidence" value="ECO:0007669"/>
    <property type="project" value="InterPro"/>
</dbReference>
<dbReference type="GO" id="GO:0015979">
    <property type="term" value="P:photosynthesis"/>
    <property type="evidence" value="ECO:0007669"/>
    <property type="project" value="UniProtKB-UniRule"/>
</dbReference>
<dbReference type="HAMAP" id="MF_01316">
    <property type="entry name" value="PSII_PsbI"/>
    <property type="match status" value="1"/>
</dbReference>
<dbReference type="InterPro" id="IPR003686">
    <property type="entry name" value="PSII_PsbI"/>
</dbReference>
<dbReference type="InterPro" id="IPR037271">
    <property type="entry name" value="PSII_PsbI_sf"/>
</dbReference>
<dbReference type="NCBIfam" id="NF002735">
    <property type="entry name" value="PRK02655.1"/>
    <property type="match status" value="1"/>
</dbReference>
<dbReference type="PANTHER" id="PTHR35772">
    <property type="entry name" value="PHOTOSYSTEM II REACTION CENTER PROTEIN I"/>
    <property type="match status" value="1"/>
</dbReference>
<dbReference type="PANTHER" id="PTHR35772:SF1">
    <property type="entry name" value="PHOTOSYSTEM II REACTION CENTER PROTEIN I"/>
    <property type="match status" value="1"/>
</dbReference>
<dbReference type="Pfam" id="PF02532">
    <property type="entry name" value="PsbI"/>
    <property type="match status" value="1"/>
</dbReference>
<dbReference type="SUPFAM" id="SSF161041">
    <property type="entry name" value="Photosystem II reaction center protein I, PsbI"/>
    <property type="match status" value="1"/>
</dbReference>
<name>PSBI_MAIZE</name>
<comment type="function">
    <text evidence="1">One of the components of the core complex of photosystem II (PSII), required for its stability and/or assembly. PSII is a light-driven water:plastoquinone oxidoreductase that uses light energy to abstract electrons from H(2)O, generating O(2) and a proton gradient subsequently used for ATP formation. It consists of a core antenna complex that captures photons, and an electron transfer chain that converts photonic excitation into a charge separation.</text>
</comment>
<comment type="subunit">
    <text evidence="1">PSII is composed of 1 copy each of membrane proteins PsbA, PsbB, PsbC, PsbD, PsbE, PsbF, PsbH, PsbI, PsbJ, PsbK, PsbL, PsbM, PsbT, PsbX, PsbY, PsbZ, Psb30/Ycf12, at least 3 peripheral proteins of the oxygen-evolving complex and a large number of cofactors. It forms dimeric complexes.</text>
</comment>
<comment type="subcellular location">
    <subcellularLocation>
        <location evidence="1">Plastid</location>
        <location evidence="1">Chloroplast thylakoid membrane</location>
        <topology evidence="1">Single-pass membrane protein</topology>
    </subcellularLocation>
</comment>
<comment type="similarity">
    <text evidence="1">Belongs to the PsbI family.</text>
</comment>
<feature type="chain" id="PRO_0000219633" description="Photosystem II reaction center protein I">
    <location>
        <begin position="1"/>
        <end position="36"/>
    </location>
</feature>
<feature type="transmembrane region" description="Helical" evidence="1">
    <location>
        <begin position="4"/>
        <end position="24"/>
    </location>
</feature>
<gene>
    <name evidence="1" type="primary">psbI</name>
</gene>